<name>Y593_CAMJE</name>
<feature type="chain" id="PRO_0000166305" description="UPF0126 membrane protein Cj0593c">
    <location>
        <begin position="1"/>
        <end position="210"/>
    </location>
</feature>
<feature type="transmembrane region" description="Helical" evidence="1">
    <location>
        <begin position="31"/>
        <end position="51"/>
    </location>
</feature>
<feature type="transmembrane region" description="Helical" evidence="1">
    <location>
        <begin position="60"/>
        <end position="80"/>
    </location>
</feature>
<feature type="transmembrane region" description="Helical" evidence="1">
    <location>
        <begin position="94"/>
        <end position="114"/>
    </location>
</feature>
<feature type="transmembrane region" description="Helical" evidence="1">
    <location>
        <begin position="117"/>
        <end position="137"/>
    </location>
</feature>
<feature type="transmembrane region" description="Helical" evidence="1">
    <location>
        <begin position="153"/>
        <end position="173"/>
    </location>
</feature>
<feature type="transmembrane region" description="Helical" evidence="1">
    <location>
        <begin position="175"/>
        <end position="195"/>
    </location>
</feature>
<dbReference type="EMBL" id="AL111168">
    <property type="protein sequence ID" value="CAL34739.1"/>
    <property type="molecule type" value="Genomic_DNA"/>
</dbReference>
<dbReference type="PIR" id="H81406">
    <property type="entry name" value="H81406"/>
</dbReference>
<dbReference type="RefSeq" id="WP_002852232.1">
    <property type="nucleotide sequence ID" value="NZ_SZUC01000002.1"/>
</dbReference>
<dbReference type="RefSeq" id="YP_002344023.1">
    <property type="nucleotide sequence ID" value="NC_002163.1"/>
</dbReference>
<dbReference type="SMR" id="Q9PHS3"/>
<dbReference type="IntAct" id="Q9PHS3">
    <property type="interactions" value="2"/>
</dbReference>
<dbReference type="STRING" id="192222.Cj0593c"/>
<dbReference type="PaxDb" id="192222-Cj0593c"/>
<dbReference type="EnsemblBacteria" id="CAL34739">
    <property type="protein sequence ID" value="CAL34739"/>
    <property type="gene ID" value="Cj0593c"/>
</dbReference>
<dbReference type="GeneID" id="904918"/>
<dbReference type="KEGG" id="cje:Cj0593c"/>
<dbReference type="PATRIC" id="fig|192222.6.peg.585"/>
<dbReference type="eggNOG" id="COG2860">
    <property type="taxonomic scope" value="Bacteria"/>
</dbReference>
<dbReference type="HOGENOM" id="CLU_064906_2_0_7"/>
<dbReference type="OrthoDB" id="9791874at2"/>
<dbReference type="Proteomes" id="UP000000799">
    <property type="component" value="Chromosome"/>
</dbReference>
<dbReference type="GO" id="GO:0005886">
    <property type="term" value="C:plasma membrane"/>
    <property type="evidence" value="ECO:0007669"/>
    <property type="project" value="UniProtKB-SubCell"/>
</dbReference>
<dbReference type="InterPro" id="IPR005115">
    <property type="entry name" value="Gly_transporter"/>
</dbReference>
<dbReference type="PANTHER" id="PTHR30506">
    <property type="entry name" value="INNER MEMBRANE PROTEIN"/>
    <property type="match status" value="1"/>
</dbReference>
<dbReference type="PANTHER" id="PTHR30506:SF3">
    <property type="entry name" value="UPF0126 INNER MEMBRANE PROTEIN YADS-RELATED"/>
    <property type="match status" value="1"/>
</dbReference>
<dbReference type="Pfam" id="PF03458">
    <property type="entry name" value="Gly_transporter"/>
    <property type="match status" value="2"/>
</dbReference>
<accession>Q9PHS3</accession>
<accession>Q0PAS4</accession>
<protein>
    <recommendedName>
        <fullName>UPF0126 membrane protein Cj0593c</fullName>
    </recommendedName>
</protein>
<sequence length="210" mass="22886">MEINALTITTLYIIGISAEGMTGALAAGRHKMDLFGVIFIALVTAIGGGSIRDVLLGHYPLTWVKHPEYIILICFCALVATKIPRVVTKLETLFLTLDAIGLVVFSILGAQIAIDQNHGFIIAVAAAVITGVFGGILRDILCMRIPLVFQKEIYAGIAIIAGAIYYSLIIWLELNALVCTLLTLFIGVFARLLAIKYQWSLPIFSYNEEK</sequence>
<keyword id="KW-1003">Cell membrane</keyword>
<keyword id="KW-0472">Membrane</keyword>
<keyword id="KW-1185">Reference proteome</keyword>
<keyword id="KW-0812">Transmembrane</keyword>
<keyword id="KW-1133">Transmembrane helix</keyword>
<reference key="1">
    <citation type="journal article" date="2000" name="Nature">
        <title>The genome sequence of the food-borne pathogen Campylobacter jejuni reveals hypervariable sequences.</title>
        <authorList>
            <person name="Parkhill J."/>
            <person name="Wren B.W."/>
            <person name="Mungall K.L."/>
            <person name="Ketley J.M."/>
            <person name="Churcher C.M."/>
            <person name="Basham D."/>
            <person name="Chillingworth T."/>
            <person name="Davies R.M."/>
            <person name="Feltwell T."/>
            <person name="Holroyd S."/>
            <person name="Jagels K."/>
            <person name="Karlyshev A.V."/>
            <person name="Moule S."/>
            <person name="Pallen M.J."/>
            <person name="Penn C.W."/>
            <person name="Quail M.A."/>
            <person name="Rajandream M.A."/>
            <person name="Rutherford K.M."/>
            <person name="van Vliet A.H.M."/>
            <person name="Whitehead S."/>
            <person name="Barrell B.G."/>
        </authorList>
    </citation>
    <scope>NUCLEOTIDE SEQUENCE [LARGE SCALE GENOMIC DNA]</scope>
    <source>
        <strain>ATCC 700819 / NCTC 11168</strain>
    </source>
</reference>
<organism>
    <name type="scientific">Campylobacter jejuni subsp. jejuni serotype O:2 (strain ATCC 700819 / NCTC 11168)</name>
    <dbReference type="NCBI Taxonomy" id="192222"/>
    <lineage>
        <taxon>Bacteria</taxon>
        <taxon>Pseudomonadati</taxon>
        <taxon>Campylobacterota</taxon>
        <taxon>Epsilonproteobacteria</taxon>
        <taxon>Campylobacterales</taxon>
        <taxon>Campylobacteraceae</taxon>
        <taxon>Campylobacter</taxon>
    </lineage>
</organism>
<proteinExistence type="inferred from homology"/>
<evidence type="ECO:0000255" key="1"/>
<evidence type="ECO:0000305" key="2"/>
<comment type="subcellular location">
    <subcellularLocation>
        <location evidence="2">Cell membrane</location>
        <topology evidence="2">Multi-pass membrane protein</topology>
    </subcellularLocation>
</comment>
<comment type="similarity">
    <text evidence="2">Belongs to the UPF0126 family.</text>
</comment>
<gene>
    <name type="ordered locus">Cj0593c</name>
</gene>